<sequence>MSHHKKRVYPQAQFQYGAGVPPAGIPVSDASIIPPQVQSPQVGATDNMIPPYNQTPTMNQMEQAPQAQMFTPAQQQLNQQINSVTTNMGAMNIGTPMMEQMPQQMTPQPQMYGQSQGLMGHSNKPMNQLYPVDLLTELPPPIHDLMLPPPPLMVSPDKMLVPSETANASSDYLRCTLNAMPKNGSLLKKSKLPLALVIRPYQHLHDEVNPPPLNEDGLVVRCRRCRSYMNPFVTFIEQGRRWRCNFCRLANDVPMQLDQSFEGAPANRYERNEIKHSVMEYLAPKEYTVRQPPPSTYIFVLDVSQNAVKNGLLATTARSILDTLEFLPNHDNRTRVSILAVDNSLHYFSIPLDEESDQIRMMDISDIDEPFLPKPHSMIVPLNECRNNLEKLLTQLPEIFQFNIMSKFALGPALKAAQNMISNLGGKIVVVSATLPNIGIGKLQRRNESGVANTPKESTQLLSCQDAFYKNFTITCSKSQVSVDLFLASEDYMDVASLSNLGRFTGGQTHFYPGFTAANIADVTKFTKEFSKFLSMDLSTETVMRARGSTGIRMSAFYGHFFNRSSDLCAFSTMPRDQSYVFEMSIDENIGTEYCYVQIAVLLSLNTSQRRIRIITVAIPTTESLSEVYASADQLAIADFFTKKAVEKAMNSSLQDARDLLNKSLQDILATYKKEIVVSNTAGGAPLRFCANLRMLPLLVHALSKHTAFRAGIVPSDHRAAALNNLESMPLKYLVKSAYARVYSLHDMVDEAGYPDENGEIVLPEPINASASLFERYGLYLIDNSSELFLWVGGDAVPELVNDVFGLQDIFQIPNGKHELAIVEGSEFNERVRNIIQKVREHDDVITYQTLYIVRGPSVSEPVGHAAGRELQPLRMWATSNLVEDKVLGTESYREFLQTLKNKLNK</sequence>
<keyword id="KW-0963">Cytoplasm</keyword>
<keyword id="KW-0968">Cytoplasmic vesicle</keyword>
<keyword id="KW-0256">Endoplasmic reticulum</keyword>
<keyword id="KW-0931">ER-Golgi transport</keyword>
<keyword id="KW-0333">Golgi apparatus</keyword>
<keyword id="KW-0472">Membrane</keyword>
<keyword id="KW-0479">Metal-binding</keyword>
<keyword id="KW-0653">Protein transport</keyword>
<keyword id="KW-1185">Reference proteome</keyword>
<keyword id="KW-0813">Transport</keyword>
<keyword id="KW-0862">Zinc</keyword>
<comment type="function">
    <text evidence="1">Component of the coat protein complex II (COPII) which promotes the formation of transport vesicles from the endoplasmic reticulum (ER). The coat has two main functions, the physical deformation of the endoplasmic reticulum membrane into vesicles and the selection of cargo molecules (By similarity).</text>
</comment>
<comment type="subunit">
    <text evidence="1">The COPII coat is composed of at least 5 proteins: the SEC23/24 complex, the SEC13/31 complex, and the protein SAR1. Golgi apparatus membrane; Peripheral membrane protein; Cytoplasmic side.</text>
</comment>
<comment type="subcellular location">
    <subcellularLocation>
        <location evidence="1">Cytoplasm</location>
    </subcellularLocation>
    <subcellularLocation>
        <location evidence="1">Cytoplasmic vesicle</location>
        <location evidence="1">COPII-coated vesicle membrane</location>
        <topology evidence="1">Peripheral membrane protein</topology>
        <orientation evidence="1">Cytoplasmic side</orientation>
    </subcellularLocation>
    <subcellularLocation>
        <location evidence="1">Endoplasmic reticulum membrane</location>
        <topology evidence="1">Peripheral membrane protein</topology>
        <orientation evidence="1">Cytoplasmic side</orientation>
    </subcellularLocation>
    <subcellularLocation>
        <location evidence="1">Golgi apparatus membrane</location>
        <topology evidence="1">Peripheral membrane protein</topology>
        <orientation evidence="1">Cytoplasmic side</orientation>
    </subcellularLocation>
</comment>
<comment type="similarity">
    <text evidence="2">Belongs to the SEC23/SEC24 family. SEC24 subfamily.</text>
</comment>
<organism>
    <name type="scientific">Candida glabrata (strain ATCC 2001 / BCRC 20586 / JCM 3761 / NBRC 0622 / NRRL Y-65 / CBS 138)</name>
    <name type="common">Yeast</name>
    <name type="synonym">Nakaseomyces glabratus</name>
    <dbReference type="NCBI Taxonomy" id="284593"/>
    <lineage>
        <taxon>Eukaryota</taxon>
        <taxon>Fungi</taxon>
        <taxon>Dikarya</taxon>
        <taxon>Ascomycota</taxon>
        <taxon>Saccharomycotina</taxon>
        <taxon>Saccharomycetes</taxon>
        <taxon>Saccharomycetales</taxon>
        <taxon>Saccharomycetaceae</taxon>
        <taxon>Nakaseomyces</taxon>
    </lineage>
</organism>
<accession>Q6FWD3</accession>
<protein>
    <recommendedName>
        <fullName>Protein transport protein SEC24-2</fullName>
    </recommendedName>
</protein>
<reference key="1">
    <citation type="journal article" date="2004" name="Nature">
        <title>Genome evolution in yeasts.</title>
        <authorList>
            <person name="Dujon B."/>
            <person name="Sherman D."/>
            <person name="Fischer G."/>
            <person name="Durrens P."/>
            <person name="Casaregola S."/>
            <person name="Lafontaine I."/>
            <person name="de Montigny J."/>
            <person name="Marck C."/>
            <person name="Neuveglise C."/>
            <person name="Talla E."/>
            <person name="Goffard N."/>
            <person name="Frangeul L."/>
            <person name="Aigle M."/>
            <person name="Anthouard V."/>
            <person name="Babour A."/>
            <person name="Barbe V."/>
            <person name="Barnay S."/>
            <person name="Blanchin S."/>
            <person name="Beckerich J.-M."/>
            <person name="Beyne E."/>
            <person name="Bleykasten C."/>
            <person name="Boisrame A."/>
            <person name="Boyer J."/>
            <person name="Cattolico L."/>
            <person name="Confanioleri F."/>
            <person name="de Daruvar A."/>
            <person name="Despons L."/>
            <person name="Fabre E."/>
            <person name="Fairhead C."/>
            <person name="Ferry-Dumazet H."/>
            <person name="Groppi A."/>
            <person name="Hantraye F."/>
            <person name="Hennequin C."/>
            <person name="Jauniaux N."/>
            <person name="Joyet P."/>
            <person name="Kachouri R."/>
            <person name="Kerrest A."/>
            <person name="Koszul R."/>
            <person name="Lemaire M."/>
            <person name="Lesur I."/>
            <person name="Ma L."/>
            <person name="Muller H."/>
            <person name="Nicaud J.-M."/>
            <person name="Nikolski M."/>
            <person name="Oztas S."/>
            <person name="Ozier-Kalogeropoulos O."/>
            <person name="Pellenz S."/>
            <person name="Potier S."/>
            <person name="Richard G.-F."/>
            <person name="Straub M.-L."/>
            <person name="Suleau A."/>
            <person name="Swennen D."/>
            <person name="Tekaia F."/>
            <person name="Wesolowski-Louvel M."/>
            <person name="Westhof E."/>
            <person name="Wirth B."/>
            <person name="Zeniou-Meyer M."/>
            <person name="Zivanovic Y."/>
            <person name="Bolotin-Fukuhara M."/>
            <person name="Thierry A."/>
            <person name="Bouchier C."/>
            <person name="Caudron B."/>
            <person name="Scarpelli C."/>
            <person name="Gaillardin C."/>
            <person name="Weissenbach J."/>
            <person name="Wincker P."/>
            <person name="Souciet J.-L."/>
        </authorList>
    </citation>
    <scope>NUCLEOTIDE SEQUENCE [LARGE SCALE GENOMIC DNA]</scope>
    <source>
        <strain>ATCC 2001 / BCRC 20586 / JCM 3761 / NBRC 0622 / NRRL Y-65 / CBS 138</strain>
    </source>
</reference>
<proteinExistence type="inferred from homology"/>
<feature type="chain" id="PRO_0000295483" description="Protein transport protein SEC24-2">
    <location>
        <begin position="1"/>
        <end position="906"/>
    </location>
</feature>
<feature type="region of interest" description="Zinc finger-like">
    <location>
        <begin position="222"/>
        <end position="247"/>
    </location>
</feature>
<feature type="binding site" evidence="1">
    <location>
        <position position="222"/>
    </location>
    <ligand>
        <name>Zn(2+)</name>
        <dbReference type="ChEBI" id="CHEBI:29105"/>
    </ligand>
</feature>
<feature type="binding site" evidence="1">
    <location>
        <position position="225"/>
    </location>
    <ligand>
        <name>Zn(2+)</name>
        <dbReference type="ChEBI" id="CHEBI:29105"/>
    </ligand>
</feature>
<feature type="binding site" evidence="1">
    <location>
        <position position="244"/>
    </location>
    <ligand>
        <name>Zn(2+)</name>
        <dbReference type="ChEBI" id="CHEBI:29105"/>
    </ligand>
</feature>
<feature type="binding site" evidence="1">
    <location>
        <position position="247"/>
    </location>
    <ligand>
        <name>Zn(2+)</name>
        <dbReference type="ChEBI" id="CHEBI:29105"/>
    </ligand>
</feature>
<evidence type="ECO:0000250" key="1"/>
<evidence type="ECO:0000305" key="2"/>
<dbReference type="EMBL" id="CR380950">
    <property type="protein sequence ID" value="CAG58372.1"/>
    <property type="molecule type" value="Genomic_DNA"/>
</dbReference>
<dbReference type="RefSeq" id="XP_445461.1">
    <property type="nucleotide sequence ID" value="XM_445461.1"/>
</dbReference>
<dbReference type="SMR" id="Q6FWD3"/>
<dbReference type="FunCoup" id="Q6FWD3">
    <property type="interactions" value="875"/>
</dbReference>
<dbReference type="STRING" id="284593.Q6FWD3"/>
<dbReference type="EnsemblFungi" id="CAGL0D01078g-T">
    <property type="protein sequence ID" value="CAGL0D01078g-T-p1"/>
    <property type="gene ID" value="CAGL0D01078g"/>
</dbReference>
<dbReference type="KEGG" id="cgr:2886987"/>
<dbReference type="CGD" id="CAL0128245">
    <property type="gene designation" value="CAGL0D01078g"/>
</dbReference>
<dbReference type="VEuPathDB" id="FungiDB:B1J91_D01078g"/>
<dbReference type="VEuPathDB" id="FungiDB:CAGL0D01078g"/>
<dbReference type="eggNOG" id="KOG1985">
    <property type="taxonomic scope" value="Eukaryota"/>
</dbReference>
<dbReference type="HOGENOM" id="CLU_004589_2_1_1"/>
<dbReference type="InParanoid" id="Q6FWD3"/>
<dbReference type="OMA" id="AVECSKQ"/>
<dbReference type="Proteomes" id="UP000002428">
    <property type="component" value="Chromosome D"/>
</dbReference>
<dbReference type="GO" id="GO:0030127">
    <property type="term" value="C:COPII vesicle coat"/>
    <property type="evidence" value="ECO:0007669"/>
    <property type="project" value="EnsemblFungi"/>
</dbReference>
<dbReference type="GO" id="GO:0070971">
    <property type="term" value="C:endoplasmic reticulum exit site"/>
    <property type="evidence" value="ECO:0007669"/>
    <property type="project" value="TreeGrafter"/>
</dbReference>
<dbReference type="GO" id="GO:0005789">
    <property type="term" value="C:endoplasmic reticulum membrane"/>
    <property type="evidence" value="ECO:0007669"/>
    <property type="project" value="UniProtKB-SubCell"/>
</dbReference>
<dbReference type="GO" id="GO:0000139">
    <property type="term" value="C:Golgi membrane"/>
    <property type="evidence" value="ECO:0007669"/>
    <property type="project" value="UniProtKB-SubCell"/>
</dbReference>
<dbReference type="GO" id="GO:0005048">
    <property type="term" value="F:signal sequence binding"/>
    <property type="evidence" value="ECO:0007669"/>
    <property type="project" value="EnsemblFungi"/>
</dbReference>
<dbReference type="GO" id="GO:0000149">
    <property type="term" value="F:SNARE binding"/>
    <property type="evidence" value="ECO:0007669"/>
    <property type="project" value="TreeGrafter"/>
</dbReference>
<dbReference type="GO" id="GO:0008270">
    <property type="term" value="F:zinc ion binding"/>
    <property type="evidence" value="ECO:0007669"/>
    <property type="project" value="InterPro"/>
</dbReference>
<dbReference type="GO" id="GO:0090110">
    <property type="term" value="P:COPII-coated vesicle cargo loading"/>
    <property type="evidence" value="ECO:0007669"/>
    <property type="project" value="EnsemblFungi"/>
</dbReference>
<dbReference type="GO" id="GO:0006886">
    <property type="term" value="P:intracellular protein transport"/>
    <property type="evidence" value="ECO:0007669"/>
    <property type="project" value="InterPro"/>
</dbReference>
<dbReference type="GO" id="GO:0016236">
    <property type="term" value="P:macroautophagy"/>
    <property type="evidence" value="ECO:0007669"/>
    <property type="project" value="EnsemblFungi"/>
</dbReference>
<dbReference type="GO" id="GO:1902953">
    <property type="term" value="P:positive regulation of ER to Golgi vesicle-mediated transport"/>
    <property type="evidence" value="ECO:0007669"/>
    <property type="project" value="EnsemblFungi"/>
</dbReference>
<dbReference type="GO" id="GO:0070863">
    <property type="term" value="P:positive regulation of protein exit from endoplasmic reticulum"/>
    <property type="evidence" value="ECO:0007669"/>
    <property type="project" value="EnsemblFungi"/>
</dbReference>
<dbReference type="CDD" id="cd01479">
    <property type="entry name" value="Sec24-like"/>
    <property type="match status" value="1"/>
</dbReference>
<dbReference type="FunFam" id="3.40.20.10:FF:000049">
    <property type="entry name" value="Vesicle coat component"/>
    <property type="match status" value="1"/>
</dbReference>
<dbReference type="FunFam" id="3.40.50.410:FF:000081">
    <property type="entry name" value="Vesicle coat component"/>
    <property type="match status" value="1"/>
</dbReference>
<dbReference type="Gene3D" id="2.60.40.1670">
    <property type="entry name" value="beta-sandwich domain of Sec23/24"/>
    <property type="match status" value="1"/>
</dbReference>
<dbReference type="Gene3D" id="1.20.120.730">
    <property type="entry name" value="Sec23/Sec24 helical domain"/>
    <property type="match status" value="2"/>
</dbReference>
<dbReference type="Gene3D" id="3.40.20.10">
    <property type="entry name" value="Severin"/>
    <property type="match status" value="1"/>
</dbReference>
<dbReference type="Gene3D" id="3.40.50.410">
    <property type="entry name" value="von Willebrand factor, type A domain"/>
    <property type="match status" value="1"/>
</dbReference>
<dbReference type="Gene3D" id="2.30.30.380">
    <property type="entry name" value="Zn-finger domain of Sec23/24"/>
    <property type="match status" value="1"/>
</dbReference>
<dbReference type="InterPro" id="IPR029006">
    <property type="entry name" value="ADF-H/Gelsolin-like_dom_sf"/>
</dbReference>
<dbReference type="InterPro" id="IPR007123">
    <property type="entry name" value="Gelsolin-like_dom"/>
</dbReference>
<dbReference type="InterPro" id="IPR036180">
    <property type="entry name" value="Gelsolin-like_dom_sf"/>
</dbReference>
<dbReference type="InterPro" id="IPR006900">
    <property type="entry name" value="Sec23/24_helical_dom"/>
</dbReference>
<dbReference type="InterPro" id="IPR036175">
    <property type="entry name" value="Sec23/24_helical_dom_sf"/>
</dbReference>
<dbReference type="InterPro" id="IPR006896">
    <property type="entry name" value="Sec23/24_trunk_dom"/>
</dbReference>
<dbReference type="InterPro" id="IPR012990">
    <property type="entry name" value="Sec23_24_beta_S"/>
</dbReference>
<dbReference type="InterPro" id="IPR050550">
    <property type="entry name" value="SEC23_SEC24_subfamily"/>
</dbReference>
<dbReference type="InterPro" id="IPR041742">
    <property type="entry name" value="Sec24-like_trunk_dom"/>
</dbReference>
<dbReference type="InterPro" id="IPR036465">
    <property type="entry name" value="vWFA_dom_sf"/>
</dbReference>
<dbReference type="InterPro" id="IPR006895">
    <property type="entry name" value="Znf_Sec23_Sec24"/>
</dbReference>
<dbReference type="InterPro" id="IPR036174">
    <property type="entry name" value="Znf_Sec23_Sec24_sf"/>
</dbReference>
<dbReference type="PANTHER" id="PTHR13803">
    <property type="entry name" value="SEC24-RELATED PROTEIN"/>
    <property type="match status" value="1"/>
</dbReference>
<dbReference type="PANTHER" id="PTHR13803:SF39">
    <property type="entry name" value="SECRETORY 24AB, ISOFORM A"/>
    <property type="match status" value="1"/>
</dbReference>
<dbReference type="Pfam" id="PF00626">
    <property type="entry name" value="Gelsolin"/>
    <property type="match status" value="1"/>
</dbReference>
<dbReference type="Pfam" id="PF08033">
    <property type="entry name" value="Sec23_BS"/>
    <property type="match status" value="1"/>
</dbReference>
<dbReference type="Pfam" id="PF04815">
    <property type="entry name" value="Sec23_helical"/>
    <property type="match status" value="1"/>
</dbReference>
<dbReference type="Pfam" id="PF04811">
    <property type="entry name" value="Sec23_trunk"/>
    <property type="match status" value="1"/>
</dbReference>
<dbReference type="Pfam" id="PF04810">
    <property type="entry name" value="zf-Sec23_Sec24"/>
    <property type="match status" value="1"/>
</dbReference>
<dbReference type="SUPFAM" id="SSF81995">
    <property type="entry name" value="beta-sandwich domain of Sec23/24"/>
    <property type="match status" value="1"/>
</dbReference>
<dbReference type="SUPFAM" id="SSF82754">
    <property type="entry name" value="C-terminal, gelsolin-like domain of Sec23/24"/>
    <property type="match status" value="1"/>
</dbReference>
<dbReference type="SUPFAM" id="SSF81811">
    <property type="entry name" value="Helical domain of Sec23/24"/>
    <property type="match status" value="1"/>
</dbReference>
<dbReference type="SUPFAM" id="SSF53300">
    <property type="entry name" value="vWA-like"/>
    <property type="match status" value="1"/>
</dbReference>
<dbReference type="SUPFAM" id="SSF82919">
    <property type="entry name" value="Zn-finger domain of Sec23/24"/>
    <property type="match status" value="1"/>
</dbReference>
<gene>
    <name type="primary">SEC242</name>
    <name type="ordered locus">CAGL0D01078g</name>
</gene>
<name>SC242_CANGA</name>